<comment type="function">
    <text evidence="1">Involved in the control of energetic metabolism and significantly contribute to cell fitness, especially under respiratory growth conditions.</text>
</comment>
<comment type="subcellular location">
    <subcellularLocation>
        <location evidence="1">Cell membrane</location>
        <topology evidence="1">Peripheral membrane protein</topology>
    </subcellularLocation>
</comment>
<comment type="similarity">
    <text evidence="2">Belongs to the RGI1 family.</text>
</comment>
<feature type="chain" id="PRO_0000402289" description="Respiratory growth induced protein 1">
    <location>
        <begin position="1"/>
        <end position="201"/>
    </location>
</feature>
<keyword id="KW-1003">Cell membrane</keyword>
<keyword id="KW-0472">Membrane</keyword>
<keyword id="KW-1185">Reference proteome</keyword>
<sequence>MTAKKSKSGRMTTALDLTTCEKLEHLQPIPKSRSSSITSIESEDGMMSTVLKPPPRRDFDDLMAFEGFIRDETWDNDFDYCHAHLTYYPPFIMKEVHNNLDKIKPTMNKNSRKFKRNLQHHIKKHLMHDMETCSGFKMDFNKVGMVETPTKVKWRFEDMGDHGFSKEEEDMYGRHWKLELEVTCNNENPLVEVDYKATPIM</sequence>
<name>RGI1_PICGU</name>
<reference key="1">
    <citation type="journal article" date="2009" name="Nature">
        <title>Evolution of pathogenicity and sexual reproduction in eight Candida genomes.</title>
        <authorList>
            <person name="Butler G."/>
            <person name="Rasmussen M.D."/>
            <person name="Lin M.F."/>
            <person name="Santos M.A.S."/>
            <person name="Sakthikumar S."/>
            <person name="Munro C.A."/>
            <person name="Rheinbay E."/>
            <person name="Grabherr M."/>
            <person name="Forche A."/>
            <person name="Reedy J.L."/>
            <person name="Agrafioti I."/>
            <person name="Arnaud M.B."/>
            <person name="Bates S."/>
            <person name="Brown A.J.P."/>
            <person name="Brunke S."/>
            <person name="Costanzo M.C."/>
            <person name="Fitzpatrick D.A."/>
            <person name="de Groot P.W.J."/>
            <person name="Harris D."/>
            <person name="Hoyer L.L."/>
            <person name="Hube B."/>
            <person name="Klis F.M."/>
            <person name="Kodira C."/>
            <person name="Lennard N."/>
            <person name="Logue M.E."/>
            <person name="Martin R."/>
            <person name="Neiman A.M."/>
            <person name="Nikolaou E."/>
            <person name="Quail M.A."/>
            <person name="Quinn J."/>
            <person name="Santos M.C."/>
            <person name="Schmitzberger F.F."/>
            <person name="Sherlock G."/>
            <person name="Shah P."/>
            <person name="Silverstein K.A.T."/>
            <person name="Skrzypek M.S."/>
            <person name="Soll D."/>
            <person name="Staggs R."/>
            <person name="Stansfield I."/>
            <person name="Stumpf M.P.H."/>
            <person name="Sudbery P.E."/>
            <person name="Srikantha T."/>
            <person name="Zeng Q."/>
            <person name="Berman J."/>
            <person name="Berriman M."/>
            <person name="Heitman J."/>
            <person name="Gow N.A.R."/>
            <person name="Lorenz M.C."/>
            <person name="Birren B.W."/>
            <person name="Kellis M."/>
            <person name="Cuomo C.A."/>
        </authorList>
    </citation>
    <scope>NUCLEOTIDE SEQUENCE [LARGE SCALE GENOMIC DNA]</scope>
    <source>
        <strain>ATCC 6260 / CBS 566 / DSM 6381 / JCM 1539 / NBRC 10279 / NRRL Y-324</strain>
    </source>
</reference>
<dbReference type="EMBL" id="CH408156">
    <property type="protein sequence ID" value="EDK37462.1"/>
    <property type="molecule type" value="Genomic_DNA"/>
</dbReference>
<dbReference type="RefSeq" id="XP_001485889.1">
    <property type="nucleotide sequence ID" value="XM_001485839.1"/>
</dbReference>
<dbReference type="SMR" id="A5DE59"/>
<dbReference type="FunCoup" id="A5DE59">
    <property type="interactions" value="98"/>
</dbReference>
<dbReference type="STRING" id="294746.A5DE59"/>
<dbReference type="GeneID" id="5128293"/>
<dbReference type="KEGG" id="pgu:PGUG_01560"/>
<dbReference type="VEuPathDB" id="FungiDB:PGUG_01560"/>
<dbReference type="eggNOG" id="ENOG502S6JA">
    <property type="taxonomic scope" value="Eukaryota"/>
</dbReference>
<dbReference type="HOGENOM" id="CLU_118207_0_0_1"/>
<dbReference type="InParanoid" id="A5DE59"/>
<dbReference type="OMA" id="HLKYYPP"/>
<dbReference type="OrthoDB" id="4082176at2759"/>
<dbReference type="Proteomes" id="UP000001997">
    <property type="component" value="Unassembled WGS sequence"/>
</dbReference>
<dbReference type="GO" id="GO:0005886">
    <property type="term" value="C:plasma membrane"/>
    <property type="evidence" value="ECO:0007669"/>
    <property type="project" value="UniProtKB-SubCell"/>
</dbReference>
<dbReference type="GO" id="GO:0006112">
    <property type="term" value="P:energy reserve metabolic process"/>
    <property type="evidence" value="ECO:0007669"/>
    <property type="project" value="InterPro"/>
</dbReference>
<dbReference type="Gene3D" id="3.40.1000.40">
    <property type="entry name" value="Respiratory growth induced protein 1"/>
    <property type="match status" value="1"/>
</dbReference>
<dbReference type="InterPro" id="IPR022554">
    <property type="entry name" value="RGI1"/>
</dbReference>
<dbReference type="InterPro" id="IPR038235">
    <property type="entry name" value="RGI1_sf"/>
</dbReference>
<dbReference type="Pfam" id="PF10843">
    <property type="entry name" value="RGI1"/>
    <property type="match status" value="1"/>
</dbReference>
<evidence type="ECO:0000250" key="1"/>
<evidence type="ECO:0000305" key="2"/>
<gene>
    <name type="primary">RGI1</name>
    <name type="ORF">PGUG_01560</name>
</gene>
<protein>
    <recommendedName>
        <fullName>Respiratory growth induced protein 1</fullName>
    </recommendedName>
</protein>
<organism>
    <name type="scientific">Meyerozyma guilliermondii (strain ATCC 6260 / CBS 566 / DSM 6381 / JCM 1539 / NBRC 10279 / NRRL Y-324)</name>
    <name type="common">Yeast</name>
    <name type="synonym">Candida guilliermondii</name>
    <dbReference type="NCBI Taxonomy" id="294746"/>
    <lineage>
        <taxon>Eukaryota</taxon>
        <taxon>Fungi</taxon>
        <taxon>Dikarya</taxon>
        <taxon>Ascomycota</taxon>
        <taxon>Saccharomycotina</taxon>
        <taxon>Pichiomycetes</taxon>
        <taxon>Debaryomycetaceae</taxon>
        <taxon>Meyerozyma</taxon>
    </lineage>
</organism>
<accession>A5DE59</accession>
<proteinExistence type="inferred from homology"/>